<gene>
    <name type="primary">TMEM100</name>
</gene>
<name>TM100_BOVIN</name>
<reference key="1">
    <citation type="submission" date="2006-01" db="EMBL/GenBank/DDBJ databases">
        <authorList>
            <consortium name="NIH - Mammalian Gene Collection (MGC) project"/>
        </authorList>
    </citation>
    <scope>NUCLEOTIDE SEQUENCE [LARGE SCALE MRNA]</scope>
    <source>
        <strain>Hereford</strain>
        <tissue>Hypothalamus</tissue>
    </source>
</reference>
<protein>
    <recommendedName>
        <fullName>Transmembrane protein 100</fullName>
    </recommendedName>
</protein>
<proteinExistence type="evidence at transcript level"/>
<keyword id="KW-1003">Cell membrane</keyword>
<keyword id="KW-0963">Cytoplasm</keyword>
<keyword id="KW-0217">Developmental protein</keyword>
<keyword id="KW-0221">Differentiation</keyword>
<keyword id="KW-0256">Endoplasmic reticulum</keyword>
<keyword id="KW-0472">Membrane</keyword>
<keyword id="KW-0597">Phosphoprotein</keyword>
<keyword id="KW-1185">Reference proteome</keyword>
<keyword id="KW-0812">Transmembrane</keyword>
<keyword id="KW-1133">Transmembrane helix</keyword>
<evidence type="ECO:0000250" key="1"/>
<evidence type="ECO:0000250" key="2">
    <source>
        <dbReference type="UniProtKB" id="Q569C0"/>
    </source>
</evidence>
<evidence type="ECO:0000250" key="3">
    <source>
        <dbReference type="UniProtKB" id="Q9CQG9"/>
    </source>
</evidence>
<evidence type="ECO:0000255" key="4"/>
<evidence type="ECO:0000305" key="5"/>
<organism>
    <name type="scientific">Bos taurus</name>
    <name type="common">Bovine</name>
    <dbReference type="NCBI Taxonomy" id="9913"/>
    <lineage>
        <taxon>Eukaryota</taxon>
        <taxon>Metazoa</taxon>
        <taxon>Chordata</taxon>
        <taxon>Craniata</taxon>
        <taxon>Vertebrata</taxon>
        <taxon>Euteleostomi</taxon>
        <taxon>Mammalia</taxon>
        <taxon>Eutheria</taxon>
        <taxon>Laurasiatheria</taxon>
        <taxon>Artiodactyla</taxon>
        <taxon>Ruminantia</taxon>
        <taxon>Pecora</taxon>
        <taxon>Bovidae</taxon>
        <taxon>Bovinae</taxon>
        <taxon>Bos</taxon>
    </lineage>
</organism>
<accession>Q2KIC8</accession>
<dbReference type="EMBL" id="BC112685">
    <property type="protein sequence ID" value="AAI12686.1"/>
    <property type="molecule type" value="mRNA"/>
</dbReference>
<dbReference type="RefSeq" id="NP_001039987.1">
    <property type="nucleotide sequence ID" value="NM_001046522.2"/>
</dbReference>
<dbReference type="RefSeq" id="XP_005219923.1">
    <property type="nucleotide sequence ID" value="XM_005219866.5"/>
</dbReference>
<dbReference type="RefSeq" id="XP_010813990.1">
    <property type="nucleotide sequence ID" value="XM_010815688.2"/>
</dbReference>
<dbReference type="RefSeq" id="XP_024836169.1">
    <property type="nucleotide sequence ID" value="XM_024980401.2"/>
</dbReference>
<dbReference type="RefSeq" id="XP_024836170.1">
    <property type="nucleotide sequence ID" value="XM_024980402.2"/>
</dbReference>
<dbReference type="SMR" id="Q2KIC8"/>
<dbReference type="FunCoup" id="Q2KIC8">
    <property type="interactions" value="77"/>
</dbReference>
<dbReference type="STRING" id="9913.ENSBTAP00000012241"/>
<dbReference type="PaxDb" id="9913-ENSBTAP00000012241"/>
<dbReference type="Ensembl" id="ENSBTAT00000012241.5">
    <property type="protein sequence ID" value="ENSBTAP00000012241.3"/>
    <property type="gene ID" value="ENSBTAG00000009292.5"/>
</dbReference>
<dbReference type="Ensembl" id="ENSBTAT00000087642.1">
    <property type="protein sequence ID" value="ENSBTAP00000085333.1"/>
    <property type="gene ID" value="ENSBTAG00000009292.5"/>
</dbReference>
<dbReference type="Ensembl" id="ENSBTAT00000098899.1">
    <property type="protein sequence ID" value="ENSBTAP00000097084.1"/>
    <property type="gene ID" value="ENSBTAG00000009292.5"/>
</dbReference>
<dbReference type="Ensembl" id="ENSBTAT00000128409.1">
    <property type="protein sequence ID" value="ENSBTAP00000095421.1"/>
    <property type="gene ID" value="ENSBTAG00000009292.5"/>
</dbReference>
<dbReference type="Ensembl" id="ENSBTAT00000134440.1">
    <property type="protein sequence ID" value="ENSBTAP00000096865.1"/>
    <property type="gene ID" value="ENSBTAG00000009292.5"/>
</dbReference>
<dbReference type="GeneID" id="613987"/>
<dbReference type="KEGG" id="bta:613987"/>
<dbReference type="CTD" id="55273"/>
<dbReference type="VEuPathDB" id="HostDB:ENSBTAG00000009292"/>
<dbReference type="VGNC" id="VGNC:35941">
    <property type="gene designation" value="TMEM100"/>
</dbReference>
<dbReference type="eggNOG" id="ENOG502RZCB">
    <property type="taxonomic scope" value="Eukaryota"/>
</dbReference>
<dbReference type="GeneTree" id="ENSGT00940000154322"/>
<dbReference type="HOGENOM" id="CLU_141108_0_0_1"/>
<dbReference type="InParanoid" id="Q2KIC8"/>
<dbReference type="OMA" id="PMTMEKS"/>
<dbReference type="OrthoDB" id="9893370at2759"/>
<dbReference type="TreeFam" id="TF332068"/>
<dbReference type="Proteomes" id="UP000009136">
    <property type="component" value="Chromosome 19"/>
</dbReference>
<dbReference type="Bgee" id="ENSBTAG00000009292">
    <property type="expression patterns" value="Expressed in lung and 97 other cell types or tissues"/>
</dbReference>
<dbReference type="GO" id="GO:0005783">
    <property type="term" value="C:endoplasmic reticulum"/>
    <property type="evidence" value="ECO:0007669"/>
    <property type="project" value="UniProtKB-SubCell"/>
</dbReference>
<dbReference type="GO" id="GO:0043204">
    <property type="term" value="C:perikaryon"/>
    <property type="evidence" value="ECO:0007669"/>
    <property type="project" value="UniProtKB-SubCell"/>
</dbReference>
<dbReference type="GO" id="GO:0048471">
    <property type="term" value="C:perinuclear region of cytoplasm"/>
    <property type="evidence" value="ECO:0007669"/>
    <property type="project" value="UniProtKB-SubCell"/>
</dbReference>
<dbReference type="GO" id="GO:0005886">
    <property type="term" value="C:plasma membrane"/>
    <property type="evidence" value="ECO:0000250"/>
    <property type="project" value="UniProtKB"/>
</dbReference>
<dbReference type="GO" id="GO:0001525">
    <property type="term" value="P:angiogenesis"/>
    <property type="evidence" value="ECO:0007669"/>
    <property type="project" value="Ensembl"/>
</dbReference>
<dbReference type="GO" id="GO:0060842">
    <property type="term" value="P:arterial endothelial cell differentiation"/>
    <property type="evidence" value="ECO:0007669"/>
    <property type="project" value="Ensembl"/>
</dbReference>
<dbReference type="GO" id="GO:0030509">
    <property type="term" value="P:BMP signaling pathway"/>
    <property type="evidence" value="ECO:0000318"/>
    <property type="project" value="GO_Central"/>
</dbReference>
<dbReference type="GO" id="GO:0003198">
    <property type="term" value="P:epithelial to mesenchymal transition involved in endocardial cushion formation"/>
    <property type="evidence" value="ECO:0007669"/>
    <property type="project" value="Ensembl"/>
</dbReference>
<dbReference type="GO" id="GO:0001701">
    <property type="term" value="P:in utero embryonic development"/>
    <property type="evidence" value="ECO:0007669"/>
    <property type="project" value="Ensembl"/>
</dbReference>
<dbReference type="GO" id="GO:0007219">
    <property type="term" value="P:Notch signaling pathway"/>
    <property type="evidence" value="ECO:0007669"/>
    <property type="project" value="Ensembl"/>
</dbReference>
<dbReference type="GO" id="GO:0045603">
    <property type="term" value="P:positive regulation of endothelial cell differentiation"/>
    <property type="evidence" value="ECO:0007669"/>
    <property type="project" value="Ensembl"/>
</dbReference>
<dbReference type="GO" id="GO:0051897">
    <property type="term" value="P:positive regulation of phosphatidylinositol 3-kinase/protein kinase B signal transduction"/>
    <property type="evidence" value="ECO:0007669"/>
    <property type="project" value="Ensembl"/>
</dbReference>
<dbReference type="GO" id="GO:2001214">
    <property type="term" value="P:positive regulation of vasculogenesis"/>
    <property type="evidence" value="ECO:0007669"/>
    <property type="project" value="Ensembl"/>
</dbReference>
<dbReference type="GO" id="GO:0050848">
    <property type="term" value="P:regulation of calcium-mediated signaling"/>
    <property type="evidence" value="ECO:0007669"/>
    <property type="project" value="Ensembl"/>
</dbReference>
<dbReference type="GO" id="GO:0051930">
    <property type="term" value="P:regulation of sensory perception of pain"/>
    <property type="evidence" value="ECO:0000250"/>
    <property type="project" value="UniProtKB"/>
</dbReference>
<dbReference type="GO" id="GO:0001570">
    <property type="term" value="P:vasculogenesis"/>
    <property type="evidence" value="ECO:0007669"/>
    <property type="project" value="Ensembl"/>
</dbReference>
<dbReference type="InterPro" id="IPR032536">
    <property type="entry name" value="TMEM100"/>
</dbReference>
<dbReference type="PANTHER" id="PTHR16100">
    <property type="entry name" value="PHOSPHOINOSITIDE-INTERACTING PROTEIN FAMILY MEMBER"/>
    <property type="match status" value="1"/>
</dbReference>
<dbReference type="PANTHER" id="PTHR16100:SF5">
    <property type="entry name" value="TRANSMEMBRANE PROTEIN 100"/>
    <property type="match status" value="1"/>
</dbReference>
<dbReference type="Pfam" id="PF16311">
    <property type="entry name" value="TMEM100"/>
    <property type="match status" value="1"/>
</dbReference>
<feature type="chain" id="PRO_0000240845" description="Transmembrane protein 100">
    <location>
        <begin position="1"/>
        <end position="134"/>
    </location>
</feature>
<feature type="transmembrane region" description="Helical" evidence="4">
    <location>
        <begin position="56"/>
        <end position="76"/>
    </location>
</feature>
<feature type="transmembrane region" description="Helical" evidence="4">
    <location>
        <begin position="84"/>
        <end position="104"/>
    </location>
</feature>
<feature type="modified residue" description="Phosphoserine" evidence="2">
    <location>
        <position position="15"/>
    </location>
</feature>
<feature type="modified residue" description="Phosphoserine" evidence="3">
    <location>
        <position position="121"/>
    </location>
</feature>
<comment type="function">
    <text evidence="3">Plays a role during embryonic arterial endothelium differentiation and vascular morphogenesis through the ACVRL1 receptor-dependent signaling pathway upon stimulation by bone morphogenetic proteins, such as GDF2/BMP9 and BMP10. Involved in the regulation of nociception, acting as a modulator of the interaction between TRPA1 and TRPV1, two molecular sensors and mediators of pain signals in dorsal root ganglia (DRG) neurons. Mechanistically, it weakens their interaction, thereby releasing the inhibition of TRPA1 by TRPV1 and increasing the single-channel open probability of the TRPA1-TRPV1 complex.</text>
</comment>
<comment type="subunit">
    <text evidence="3">Interacts (via C-terminus) with TRPA1 and TRPV1 (By similarity). Interacts with TASOR (By similarity).</text>
</comment>
<comment type="subcellular location">
    <subcellularLocation>
        <location evidence="3">Cell membrane</location>
        <topology evidence="3">Multi-pass membrane protein</topology>
    </subcellularLocation>
    <subcellularLocation>
        <location evidence="5">Membrane</location>
        <topology evidence="5">Multi-pass membrane protein</topology>
    </subcellularLocation>
    <subcellularLocation>
        <location evidence="1">Perikaryon</location>
    </subcellularLocation>
    <subcellularLocation>
        <location evidence="1">Cytoplasm</location>
        <location evidence="1">Perinuclear region</location>
    </subcellularLocation>
    <subcellularLocation>
        <location evidence="1">Endoplasmic reticulum</location>
    </subcellularLocation>
    <text evidence="1">Colocalized with HSPA5 in the endoplasmic reticulum (ER). Enriched in ER microsome. Colocalized with BMP4 in neural cell bodies and neural fibers of the enteric nervous system (By similarity).</text>
</comment>
<sequence length="134" mass="14341">MTDEPIKEILGTPKSPKPVAMEKNANGEVVVTLVPLVSEIQLAAATGGAELSCYRCVIPFAVVVLITGTVVTAVAYSFNSHGSIISILGLVLLSLGLFLLASSALCWKVRQRSKKAKRRESQTTLVVNQRGWFA</sequence>